<keyword id="KW-0903">Direct protein sequencing</keyword>
<keyword id="KW-1015">Disulfide bond</keyword>
<keyword id="KW-0528">Neurotoxin</keyword>
<keyword id="KW-0964">Secreted</keyword>
<keyword id="KW-0800">Toxin</keyword>
<comment type="function">
    <text evidence="1 2">Inhibits voltage-gated calcium channels (Cav) in rat cerebellar granule cells (By similarity). Has insecticidal activity (By similarity).</text>
</comment>
<comment type="subcellular location">
    <subcellularLocation>
        <location evidence="3">Secreted</location>
    </subcellularLocation>
</comment>
<comment type="tissue specificity">
    <text evidence="7">Expressed by the venom gland.</text>
</comment>
<comment type="mass spectrometry" mass="4400.4" method="Electrospray" evidence="3"/>
<comment type="miscellaneous">
    <text evidence="5">The primary structure of the mature peptide is identical to that of Eurypelma spider toxin 2 from Aphonopelma californicum (AC P61510).</text>
</comment>
<comment type="similarity">
    <text evidence="5">Belongs to the neurotoxin 12 (Hwtx-2) family. 06 (TXP1) subfamily.</text>
</comment>
<comment type="caution">
    <text evidence="6">It is reported in PubMed:11790834 that disulfide bonds may be in positions 4-17, 8-31 and 25-36.</text>
</comment>
<protein>
    <recommendedName>
        <fullName evidence="5">Omega-theraphotoxin-Bs1b</fullName>
        <shortName evidence="5">Omega-TRTX-Bs1b</shortName>
    </recommendedName>
    <alternativeName>
        <fullName>BsTX1b</fullName>
    </alternativeName>
    <alternativeName>
        <fullName evidence="4">Venom protein 1</fullName>
    </alternativeName>
</protein>
<proteinExistence type="evidence at protein level"/>
<evidence type="ECO:0000250" key="1">
    <source>
        <dbReference type="UniProtKB" id="P0DL63"/>
    </source>
</evidence>
<evidence type="ECO:0000250" key="2">
    <source>
        <dbReference type="UniProtKB" id="P85497"/>
    </source>
</evidence>
<evidence type="ECO:0000269" key="3">
    <source>
    </source>
</evidence>
<evidence type="ECO:0000303" key="4">
    <source>
    </source>
</evidence>
<evidence type="ECO:0000305" key="5"/>
<evidence type="ECO:0000305" key="6">
    <source>
    </source>
</evidence>
<evidence type="ECO:0000305" key="7">
    <source>
    </source>
</evidence>
<accession>P0DL79</accession>
<accession>P49265</accession>
<organism>
    <name type="scientific">Brachypelma smithi</name>
    <name type="common">Mexican red knee tarantula</name>
    <name type="synonym">Eurypelma smithi</name>
    <dbReference type="NCBI Taxonomy" id="54074"/>
    <lineage>
        <taxon>Eukaryota</taxon>
        <taxon>Metazoa</taxon>
        <taxon>Ecdysozoa</taxon>
        <taxon>Arthropoda</taxon>
        <taxon>Chelicerata</taxon>
        <taxon>Arachnida</taxon>
        <taxon>Araneae</taxon>
        <taxon>Mygalomorphae</taxon>
        <taxon>Theraphosidae</taxon>
        <taxon>Brachypelma</taxon>
    </lineage>
</organism>
<name>TXP1B_BRASM</name>
<sequence length="39" mass="4371">IIECVFSCDIEKEGKPCKPKGEKKCSGGWKCKIKLCLKI</sequence>
<feature type="peptide" id="PRO_0000442233" description="Omega-theraphotoxin-Bs1b" evidence="3">
    <location>
        <begin position="1"/>
        <end position="39"/>
    </location>
</feature>
<feature type="disulfide bond" evidence="3">
    <location>
        <begin position="4"/>
        <end position="25"/>
    </location>
</feature>
<feature type="disulfide bond" evidence="3">
    <location>
        <begin position="8"/>
        <end position="31"/>
    </location>
</feature>
<feature type="disulfide bond" evidence="3">
    <location>
        <begin position="17"/>
        <end position="36"/>
    </location>
</feature>
<reference key="1">
    <citation type="journal article" date="1994" name="Toxicon">
        <title>Primary structures of two proteins from the venom of the Mexican red knee tarantula (Brachypelma smithii).</title>
        <authorList>
            <person name="Kaiser I.I."/>
            <person name="Griffin P.R."/>
            <person name="Aird S.D."/>
            <person name="Hudiburg S."/>
            <person name="Shabanowitz J."/>
            <person name="Francis B."/>
            <person name="John T.R."/>
            <person name="Hunt D.F."/>
            <person name="Odell G.V."/>
        </authorList>
    </citation>
    <scope>PROTEIN SEQUENCE</scope>
    <scope>MASS SPECTROMETRY</scope>
    <scope>DISULFIDE BONDS</scope>
    <scope>SUBCELLULAR LOCATION</scope>
    <source>
        <tissue>Venom</tissue>
    </source>
</reference>
<reference key="2">
    <citation type="journal article" date="2002" name="Protein Sci.">
        <title>The structure of spider toxin huwentoxin-II with unique disulfide linkage: evidence for structural evolution.</title>
        <authorList>
            <person name="Shu Q."/>
            <person name="Lu S.Y."/>
            <person name="Gu X.-C."/>
            <person name="Liang S.-P."/>
        </authorList>
    </citation>
    <scope>ALTERNATIVE DISULFIDE BONDS TOPOLOGY</scope>
</reference>
<dbReference type="SMR" id="P0DL79"/>
<dbReference type="GO" id="GO:0005576">
    <property type="term" value="C:extracellular region"/>
    <property type="evidence" value="ECO:0007669"/>
    <property type="project" value="UniProtKB-SubCell"/>
</dbReference>
<dbReference type="GO" id="GO:0090729">
    <property type="term" value="F:toxin activity"/>
    <property type="evidence" value="ECO:0007669"/>
    <property type="project" value="UniProtKB-KW"/>
</dbReference>
<dbReference type="InterPro" id="IPR012625">
    <property type="entry name" value="Hwtx-2-like"/>
</dbReference>
<dbReference type="Pfam" id="PF08089">
    <property type="entry name" value="Toxin_20"/>
    <property type="match status" value="1"/>
</dbReference>
<dbReference type="SUPFAM" id="SSF57059">
    <property type="entry name" value="omega toxin-like"/>
    <property type="match status" value="1"/>
</dbReference>
<dbReference type="PROSITE" id="PS60022">
    <property type="entry name" value="HWTX_2"/>
    <property type="match status" value="1"/>
</dbReference>